<gene>
    <name type="primary">f1pep1</name>
</gene>
<protein>
    <recommendedName>
        <fullName>Prolyl endopeptidase</fullName>
        <ecNumber>3.4.21.26</ecNumber>
    </recommendedName>
    <alternativeName>
        <fullName>Post-proline cleaving enzyme</fullName>
    </alternativeName>
    <alternativeName>
        <fullName>Proline-specific endopeptidase</fullName>
        <shortName>PE</shortName>
        <shortName>PSE</shortName>
    </alternativeName>
</protein>
<keyword id="KW-0903">Direct protein sequencing</keyword>
<keyword id="KW-0378">Hydrolase</keyword>
<keyword id="KW-0574">Periplasm</keyword>
<keyword id="KW-0645">Protease</keyword>
<keyword id="KW-0720">Serine protease</keyword>
<keyword id="KW-0732">Signal</keyword>
<comment type="function">
    <text>Cleaves peptide bonds on the C-terminal side of prolyl residues within peptides that are up to approximately 30 amino acids long. Has an absolute requirement for an X-Pro bond in the trans configuration immediately preceding the Pro-Y scissible bond.</text>
</comment>
<comment type="catalytic activity">
    <reaction>
        <text>Hydrolysis of Pro-|-Xaa &gt;&gt; Ala-|-Xaa in oligopeptides.</text>
        <dbReference type="EC" id="3.4.21.26"/>
    </reaction>
</comment>
<comment type="subunit">
    <text>Monomer.</text>
</comment>
<comment type="subcellular location">
    <subcellularLocation>
        <location>Periplasm</location>
    </subcellularLocation>
</comment>
<comment type="similarity">
    <text evidence="3">Belongs to the peptidase S9A family.</text>
</comment>
<sequence>MKYNKLSVAVAAFAFAAVSAQNSNVLKYPETKKVSHTDTYFGTQVSDPYRWLEDDRAEDTKAWVQQEVKFTQDYLAQIPFRDQLKKQLMDIWNYEKISAPFKKGKYTYFSKNDGLQAQSVLYRKDAAGKTEVFLDPNKFSEKGTTSLASVSFNKKGTLVAYSISEGGSDWNKIIILDAETKKQLDETLLDVKFSGISWLGDEGFFYSSYDKPKEGSVLSGMTDKHKVYFHKLGTKQSQDELIIGGDKFPRRYIGAYVTDDQRYLVVSAANATNGNELYIKDLKNKTDFIPIITGFDSNVNVADTDGDTLYLFTDKDAPNKRLVKTTIQNPKAETWKDVIAETSEPLEINTGGGYFFATYMKDAIDQVKQYDKNGKLVRAIKLPGSGNASGFGGEKTEKDLYYSFTNYITPPTIFKYNVTTGNSEVYQKPKVKFNPENYVSEQVFYTSSDGTKIPMMISYKKGLKKDGKNPTILYSYGGFNISLQPAFSVVNAIWMENGGIYAVPNIRGGGEYGKKWHDAGTKMQKKNVFNDFIAAGEYLQKNGYTSKEYMALSGRSNGGLLVGATMTMRPDLAKVAFPGVGVLDMLRYNKFTAGAGWAYDYGTAEDSKEMFEYLKSYSPVHNVKAGTCYPSTMVITSDHDDRVVPAHSFKFGSELQAKQSCKNPILIRIETNAGHGAGRSTEQVVAENADLLSFALYEMGIKSLK</sequence>
<evidence type="ECO:0000255" key="1">
    <source>
        <dbReference type="PROSITE-ProRule" id="PRU10084"/>
    </source>
</evidence>
<evidence type="ECO:0000269" key="2">
    <source>
    </source>
</evidence>
<evidence type="ECO:0000305" key="3"/>
<organism>
    <name type="scientific">Elizabethkingia meningoseptica</name>
    <name type="common">Chryseobacterium meningosepticum</name>
    <dbReference type="NCBI Taxonomy" id="238"/>
    <lineage>
        <taxon>Bacteria</taxon>
        <taxon>Pseudomonadati</taxon>
        <taxon>Bacteroidota</taxon>
        <taxon>Flavobacteriia</taxon>
        <taxon>Flavobacteriales</taxon>
        <taxon>Weeksellaceae</taxon>
        <taxon>Elizabethkingia</taxon>
    </lineage>
</organism>
<accession>P27028</accession>
<feature type="signal peptide">
    <location>
        <begin position="1"/>
        <end position="20"/>
    </location>
</feature>
<feature type="chain" id="PRO_0000027207" description="Prolyl endopeptidase">
    <location>
        <begin position="21"/>
        <end position="705"/>
    </location>
</feature>
<feature type="active site" description="Charge relay system" evidence="1 2">
    <location>
        <position position="556"/>
    </location>
</feature>
<feature type="active site" description="Charge relay system" evidence="1">
    <location>
        <position position="675"/>
    </location>
</feature>
<feature type="sequence conflict" description="In Ref. 2; AA sequence." evidence="3" ref="2">
    <original>S</original>
    <variation>C</variation>
    <location>
        <position position="110"/>
    </location>
</feature>
<feature type="sequence conflict" description="In Ref. 2; AA sequence." evidence="3" ref="2">
    <original>R</original>
    <variation>A</variation>
    <location>
        <position position="587"/>
    </location>
</feature>
<reference key="1">
    <citation type="journal article" date="1991" name="J. Biochem.">
        <title>Prolyl endopeptidase from Flavobacterium meningosepticum: cloning and sequencing of the enzyme gene.</title>
        <authorList>
            <person name="Yoshimoto T."/>
            <person name="Kanatani A."/>
            <person name="Shimoda T."/>
            <person name="Inaoka T."/>
            <person name="Kokubo T."/>
            <person name="Tsuru D."/>
        </authorList>
    </citation>
    <scope>NUCLEOTIDE SEQUENCE [GENOMIC DNA]</scope>
    <scope>PARTIAL PROTEIN SEQUENCE</scope>
</reference>
<reference key="2">
    <citation type="journal article" date="1993" name="Appl. Microbiol. Biotechnol.">
        <title>Cloning of proline-specific endopeptidase gene from Flavobacterium meningosepticum: expression in Escherichia coli and purification of the heterologous protein.</title>
        <authorList>
            <person name="Diefenthal T."/>
            <person name="Dargatz H."/>
            <person name="Witte V."/>
            <person name="Reipen G."/>
            <person name="Svendsen I."/>
        </authorList>
    </citation>
    <scope>NUCLEOTIDE SEQUENCE [GENOMIC DNA]</scope>
    <scope>PARTIAL PROTEIN SEQUENCE</scope>
</reference>
<name>PPCE_ELIME</name>
<proteinExistence type="evidence at protein level"/>
<dbReference type="EC" id="3.4.21.26"/>
<dbReference type="EMBL" id="D10980">
    <property type="protein sequence ID" value="BAA01755.1"/>
    <property type="molecule type" value="Genomic_DNA"/>
</dbReference>
<dbReference type="EMBL" id="X63674">
    <property type="protein sequence ID" value="CAA45213.1"/>
    <property type="molecule type" value="Genomic_DNA"/>
</dbReference>
<dbReference type="PIR" id="JX0194">
    <property type="entry name" value="JX0194"/>
</dbReference>
<dbReference type="RefSeq" id="WP_016199025.1">
    <property type="nucleotide sequence ID" value="NZ_CP014338.1"/>
</dbReference>
<dbReference type="SMR" id="P27028"/>
<dbReference type="STRING" id="238.BBD35_04965"/>
<dbReference type="BindingDB" id="P27028"/>
<dbReference type="ChEMBL" id="CHEMBL6043"/>
<dbReference type="ESTHER" id="flame-ppce">
    <property type="family name" value="S9N_PPCE_Peptidase_S9"/>
</dbReference>
<dbReference type="GeneID" id="48544015"/>
<dbReference type="eggNOG" id="COG1505">
    <property type="taxonomic scope" value="Bacteria"/>
</dbReference>
<dbReference type="OrthoDB" id="9801421at2"/>
<dbReference type="GO" id="GO:0005829">
    <property type="term" value="C:cytosol"/>
    <property type="evidence" value="ECO:0007669"/>
    <property type="project" value="TreeGrafter"/>
</dbReference>
<dbReference type="GO" id="GO:0042597">
    <property type="term" value="C:periplasmic space"/>
    <property type="evidence" value="ECO:0007669"/>
    <property type="project" value="UniProtKB-SubCell"/>
</dbReference>
<dbReference type="GO" id="GO:0070012">
    <property type="term" value="F:oligopeptidase activity"/>
    <property type="evidence" value="ECO:0007669"/>
    <property type="project" value="TreeGrafter"/>
</dbReference>
<dbReference type="GO" id="GO:0004252">
    <property type="term" value="F:serine-type endopeptidase activity"/>
    <property type="evidence" value="ECO:0007669"/>
    <property type="project" value="UniProtKB-EC"/>
</dbReference>
<dbReference type="GO" id="GO:0006508">
    <property type="term" value="P:proteolysis"/>
    <property type="evidence" value="ECO:0007669"/>
    <property type="project" value="UniProtKB-KW"/>
</dbReference>
<dbReference type="FunFam" id="3.40.50.1820:FF:000005">
    <property type="entry name" value="Prolyl endopeptidase"/>
    <property type="match status" value="1"/>
</dbReference>
<dbReference type="Gene3D" id="3.40.50.1820">
    <property type="entry name" value="alpha/beta hydrolase"/>
    <property type="match status" value="1"/>
</dbReference>
<dbReference type="Gene3D" id="2.130.10.120">
    <property type="entry name" value="Prolyl oligopeptidase, N-terminal domain"/>
    <property type="match status" value="1"/>
</dbReference>
<dbReference type="InterPro" id="IPR029058">
    <property type="entry name" value="AB_hydrolase_fold"/>
</dbReference>
<dbReference type="InterPro" id="IPR002471">
    <property type="entry name" value="Pept_S9_AS"/>
</dbReference>
<dbReference type="InterPro" id="IPR023302">
    <property type="entry name" value="Pept_S9A_N"/>
</dbReference>
<dbReference type="InterPro" id="IPR001375">
    <property type="entry name" value="Peptidase_S9_cat"/>
</dbReference>
<dbReference type="InterPro" id="IPR002470">
    <property type="entry name" value="Peptidase_S9A"/>
</dbReference>
<dbReference type="InterPro" id="IPR051167">
    <property type="entry name" value="Prolyl_oligopep/macrocyclase"/>
</dbReference>
<dbReference type="PANTHER" id="PTHR42881">
    <property type="entry name" value="PROLYL ENDOPEPTIDASE"/>
    <property type="match status" value="1"/>
</dbReference>
<dbReference type="PANTHER" id="PTHR42881:SF2">
    <property type="entry name" value="PROLYL ENDOPEPTIDASE"/>
    <property type="match status" value="1"/>
</dbReference>
<dbReference type="Pfam" id="PF00326">
    <property type="entry name" value="Peptidase_S9"/>
    <property type="match status" value="1"/>
</dbReference>
<dbReference type="Pfam" id="PF02897">
    <property type="entry name" value="Peptidase_S9_N"/>
    <property type="match status" value="1"/>
</dbReference>
<dbReference type="PRINTS" id="PR00862">
    <property type="entry name" value="PROLIGOPTASE"/>
</dbReference>
<dbReference type="SUPFAM" id="SSF53474">
    <property type="entry name" value="alpha/beta-Hydrolases"/>
    <property type="match status" value="1"/>
</dbReference>
<dbReference type="SUPFAM" id="SSF50993">
    <property type="entry name" value="Peptidase/esterase 'gauge' domain"/>
    <property type="match status" value="1"/>
</dbReference>
<dbReference type="PROSITE" id="PS00708">
    <property type="entry name" value="PRO_ENDOPEP_SER"/>
    <property type="match status" value="1"/>
</dbReference>